<feature type="chain" id="PRO_1000100703" description="Cytidylate kinase">
    <location>
        <begin position="1"/>
        <end position="223"/>
    </location>
</feature>
<feature type="binding site" evidence="1">
    <location>
        <begin position="12"/>
        <end position="20"/>
    </location>
    <ligand>
        <name>ATP</name>
        <dbReference type="ChEBI" id="CHEBI:30616"/>
    </ligand>
</feature>
<gene>
    <name evidence="1" type="primary">cmk</name>
    <name type="ordered locus">XfasM23_1541</name>
</gene>
<proteinExistence type="inferred from homology"/>
<reference key="1">
    <citation type="journal article" date="2010" name="J. Bacteriol.">
        <title>Whole genome sequences of two Xylella fastidiosa strains (M12 and M23) causing almond leaf scorch disease in California.</title>
        <authorList>
            <person name="Chen J."/>
            <person name="Xie G."/>
            <person name="Han S."/>
            <person name="Chertkov O."/>
            <person name="Sims D."/>
            <person name="Civerolo E.L."/>
        </authorList>
    </citation>
    <scope>NUCLEOTIDE SEQUENCE [LARGE SCALE GENOMIC DNA]</scope>
    <source>
        <strain>M23</strain>
    </source>
</reference>
<organism>
    <name type="scientific">Xylella fastidiosa (strain M23)</name>
    <dbReference type="NCBI Taxonomy" id="405441"/>
    <lineage>
        <taxon>Bacteria</taxon>
        <taxon>Pseudomonadati</taxon>
        <taxon>Pseudomonadota</taxon>
        <taxon>Gammaproteobacteria</taxon>
        <taxon>Lysobacterales</taxon>
        <taxon>Lysobacteraceae</taxon>
        <taxon>Xylella</taxon>
    </lineage>
</organism>
<comment type="catalytic activity">
    <reaction evidence="1">
        <text>CMP + ATP = CDP + ADP</text>
        <dbReference type="Rhea" id="RHEA:11600"/>
        <dbReference type="ChEBI" id="CHEBI:30616"/>
        <dbReference type="ChEBI" id="CHEBI:58069"/>
        <dbReference type="ChEBI" id="CHEBI:60377"/>
        <dbReference type="ChEBI" id="CHEBI:456216"/>
        <dbReference type="EC" id="2.7.4.25"/>
    </reaction>
</comment>
<comment type="catalytic activity">
    <reaction evidence="1">
        <text>dCMP + ATP = dCDP + ADP</text>
        <dbReference type="Rhea" id="RHEA:25094"/>
        <dbReference type="ChEBI" id="CHEBI:30616"/>
        <dbReference type="ChEBI" id="CHEBI:57566"/>
        <dbReference type="ChEBI" id="CHEBI:58593"/>
        <dbReference type="ChEBI" id="CHEBI:456216"/>
        <dbReference type="EC" id="2.7.4.25"/>
    </reaction>
</comment>
<comment type="subcellular location">
    <subcellularLocation>
        <location evidence="1">Cytoplasm</location>
    </subcellularLocation>
</comment>
<comment type="similarity">
    <text evidence="1">Belongs to the cytidylate kinase family. Type 1 subfamily.</text>
</comment>
<protein>
    <recommendedName>
        <fullName evidence="1">Cytidylate kinase</fullName>
        <shortName evidence="1">CK</shortName>
        <ecNumber evidence="1">2.7.4.25</ecNumber>
    </recommendedName>
    <alternativeName>
        <fullName evidence="1">Cytidine monophosphate kinase</fullName>
        <shortName evidence="1">CMP kinase</shortName>
    </alternativeName>
</protein>
<name>KCY_XYLF2</name>
<dbReference type="EC" id="2.7.4.25" evidence="1"/>
<dbReference type="EMBL" id="CP001011">
    <property type="protein sequence ID" value="ACB92949.1"/>
    <property type="molecule type" value="Genomic_DNA"/>
</dbReference>
<dbReference type="RefSeq" id="WP_004088434.1">
    <property type="nucleotide sequence ID" value="NC_010577.1"/>
</dbReference>
<dbReference type="SMR" id="B2I6X2"/>
<dbReference type="GeneID" id="93905278"/>
<dbReference type="KEGG" id="xfn:XfasM23_1541"/>
<dbReference type="HOGENOM" id="CLU_079959_2_0_6"/>
<dbReference type="Proteomes" id="UP000001698">
    <property type="component" value="Chromosome"/>
</dbReference>
<dbReference type="GO" id="GO:0005737">
    <property type="term" value="C:cytoplasm"/>
    <property type="evidence" value="ECO:0007669"/>
    <property type="project" value="UniProtKB-SubCell"/>
</dbReference>
<dbReference type="GO" id="GO:0005524">
    <property type="term" value="F:ATP binding"/>
    <property type="evidence" value="ECO:0007669"/>
    <property type="project" value="UniProtKB-UniRule"/>
</dbReference>
<dbReference type="GO" id="GO:0036430">
    <property type="term" value="F:CMP kinase activity"/>
    <property type="evidence" value="ECO:0007669"/>
    <property type="project" value="RHEA"/>
</dbReference>
<dbReference type="GO" id="GO:0036431">
    <property type="term" value="F:dCMP kinase activity"/>
    <property type="evidence" value="ECO:0007669"/>
    <property type="project" value="RHEA"/>
</dbReference>
<dbReference type="GO" id="GO:0006220">
    <property type="term" value="P:pyrimidine nucleotide metabolic process"/>
    <property type="evidence" value="ECO:0007669"/>
    <property type="project" value="UniProtKB-UniRule"/>
</dbReference>
<dbReference type="CDD" id="cd02020">
    <property type="entry name" value="CMPK"/>
    <property type="match status" value="1"/>
</dbReference>
<dbReference type="Gene3D" id="3.40.50.300">
    <property type="entry name" value="P-loop containing nucleotide triphosphate hydrolases"/>
    <property type="match status" value="1"/>
</dbReference>
<dbReference type="HAMAP" id="MF_00238">
    <property type="entry name" value="Cytidyl_kinase_type1"/>
    <property type="match status" value="1"/>
</dbReference>
<dbReference type="InterPro" id="IPR003136">
    <property type="entry name" value="Cytidylate_kin"/>
</dbReference>
<dbReference type="InterPro" id="IPR011994">
    <property type="entry name" value="Cytidylate_kinase_dom"/>
</dbReference>
<dbReference type="InterPro" id="IPR027417">
    <property type="entry name" value="P-loop_NTPase"/>
</dbReference>
<dbReference type="NCBIfam" id="TIGR00017">
    <property type="entry name" value="cmk"/>
    <property type="match status" value="1"/>
</dbReference>
<dbReference type="Pfam" id="PF02224">
    <property type="entry name" value="Cytidylate_kin"/>
    <property type="match status" value="1"/>
</dbReference>
<dbReference type="SUPFAM" id="SSF52540">
    <property type="entry name" value="P-loop containing nucleoside triphosphate hydrolases"/>
    <property type="match status" value="1"/>
</dbReference>
<evidence type="ECO:0000255" key="1">
    <source>
        <dbReference type="HAMAP-Rule" id="MF_00238"/>
    </source>
</evidence>
<sequence>MADLVPVLTIDGPSGVGKGTVSKIVAARLGWHYLDSGALYRAVAVAADWAAVDVSDTTALVKCAFDTCVNFAECADGEMRVLVNSIDATDVLRMETTGVLASTIASISEVRATLKKRQQMFRRTPGLVADGRDMGTVIFPDAKYKVFLTAKAEERAQRRYKQLMKKGVSVMFGALLEEIRARDARDACRSVAPLKPADDALLIDSTCMEVDEVVAQVLALVTD</sequence>
<keyword id="KW-0067">ATP-binding</keyword>
<keyword id="KW-0963">Cytoplasm</keyword>
<keyword id="KW-0418">Kinase</keyword>
<keyword id="KW-0547">Nucleotide-binding</keyword>
<keyword id="KW-0808">Transferase</keyword>
<accession>B2I6X2</accession>